<sequence>MTQLETRTEPMVVNFGPHHPSMHGVLRLVVTLDGEDVVDCEPVIGYLHRGMEKIAENRTNVMFVPYVSRMDYAAGMFYEAVVVNAPEKMADIPVPKRASYIRVLMLELNRIANHLLWLGPFLADVGAQTPFFYIFREREMIYDLWEAATGQRLINNNYFRIGGVAADLPWGWLEKCRDFCDWFGPKIDEYEKLITNNPIFRRRIEGLGTIEKQDAINWSLSGPMLRASGVPWDLRKVDHYECYDDFDWQVASEKEGDCYARYRVRIEEMRQSLKILRQACDMIPGGPTENLEAKRLNEGKGSDAAGFDFQYVAKKVAPTFKIPNGELYTRLESGKGEIGVFIQGNNDVTPWRFKIRAADSNNLQILPHILKGHKVADIMAILGSIDVIMGSVDR</sequence>
<gene>
    <name evidence="1" type="primary">ndhH</name>
    <name type="ordered locus">SYNW2299</name>
</gene>
<organism>
    <name type="scientific">Parasynechococcus marenigrum (strain WH8102)</name>
    <dbReference type="NCBI Taxonomy" id="84588"/>
    <lineage>
        <taxon>Bacteria</taxon>
        <taxon>Bacillati</taxon>
        <taxon>Cyanobacteriota</taxon>
        <taxon>Cyanophyceae</taxon>
        <taxon>Synechococcales</taxon>
        <taxon>Prochlorococcaceae</taxon>
        <taxon>Parasynechococcus</taxon>
        <taxon>Parasynechococcus marenigrum</taxon>
    </lineage>
</organism>
<evidence type="ECO:0000255" key="1">
    <source>
        <dbReference type="HAMAP-Rule" id="MF_01358"/>
    </source>
</evidence>
<proteinExistence type="inferred from homology"/>
<feature type="chain" id="PRO_0000371940" description="NAD(P)H-quinone oxidoreductase subunit H">
    <location>
        <begin position="1"/>
        <end position="394"/>
    </location>
</feature>
<accession>Q7U3X8</accession>
<protein>
    <recommendedName>
        <fullName evidence="1">NAD(P)H-quinone oxidoreductase subunit H</fullName>
        <ecNumber evidence="1">7.1.1.-</ecNumber>
    </recommendedName>
    <alternativeName>
        <fullName>NAD(P)H dehydrogenase subunit H</fullName>
    </alternativeName>
    <alternativeName>
        <fullName evidence="1">NADH-plastoquinone oxidoreductase subunit H</fullName>
    </alternativeName>
    <alternativeName>
        <fullName evidence="1">NDH-1 subunit H</fullName>
        <shortName evidence="1">NDH-H</shortName>
    </alternativeName>
</protein>
<keyword id="KW-0472">Membrane</keyword>
<keyword id="KW-0520">NAD</keyword>
<keyword id="KW-0521">NADP</keyword>
<keyword id="KW-0618">Plastoquinone</keyword>
<keyword id="KW-0874">Quinone</keyword>
<keyword id="KW-0793">Thylakoid</keyword>
<keyword id="KW-1278">Translocase</keyword>
<keyword id="KW-0813">Transport</keyword>
<dbReference type="EC" id="7.1.1.-" evidence="1"/>
<dbReference type="EMBL" id="BX569695">
    <property type="protein sequence ID" value="CAE08814.1"/>
    <property type="molecule type" value="Genomic_DNA"/>
</dbReference>
<dbReference type="RefSeq" id="WP_011129152.1">
    <property type="nucleotide sequence ID" value="NC_005070.1"/>
</dbReference>
<dbReference type="SMR" id="Q7U3X8"/>
<dbReference type="STRING" id="84588.SYNW2299"/>
<dbReference type="KEGG" id="syw:SYNW2299"/>
<dbReference type="eggNOG" id="COG0649">
    <property type="taxonomic scope" value="Bacteria"/>
</dbReference>
<dbReference type="HOGENOM" id="CLU_015134_1_2_3"/>
<dbReference type="BioCyc" id="MetaCyc:TX72_RS11590-MONOMER"/>
<dbReference type="Proteomes" id="UP000001422">
    <property type="component" value="Chromosome"/>
</dbReference>
<dbReference type="GO" id="GO:0031676">
    <property type="term" value="C:plasma membrane-derived thylakoid membrane"/>
    <property type="evidence" value="ECO:0007669"/>
    <property type="project" value="UniProtKB-SubCell"/>
</dbReference>
<dbReference type="GO" id="GO:0051287">
    <property type="term" value="F:NAD binding"/>
    <property type="evidence" value="ECO:0007669"/>
    <property type="project" value="InterPro"/>
</dbReference>
<dbReference type="GO" id="GO:0016655">
    <property type="term" value="F:oxidoreductase activity, acting on NAD(P)H, quinone or similar compound as acceptor"/>
    <property type="evidence" value="ECO:0007669"/>
    <property type="project" value="UniProtKB-UniRule"/>
</dbReference>
<dbReference type="GO" id="GO:0048038">
    <property type="term" value="F:quinone binding"/>
    <property type="evidence" value="ECO:0007669"/>
    <property type="project" value="UniProtKB-KW"/>
</dbReference>
<dbReference type="GO" id="GO:0019684">
    <property type="term" value="P:photosynthesis, light reaction"/>
    <property type="evidence" value="ECO:0007669"/>
    <property type="project" value="UniProtKB-UniRule"/>
</dbReference>
<dbReference type="Gene3D" id="1.10.645.10">
    <property type="entry name" value="Cytochrome-c3 Hydrogenase, chain B"/>
    <property type="match status" value="1"/>
</dbReference>
<dbReference type="HAMAP" id="MF_01358">
    <property type="entry name" value="NDH1_NuoD"/>
    <property type="match status" value="1"/>
</dbReference>
<dbReference type="InterPro" id="IPR001135">
    <property type="entry name" value="NADH_Q_OxRdtase_suD"/>
</dbReference>
<dbReference type="InterPro" id="IPR014029">
    <property type="entry name" value="NADH_UbQ_OxRdtase_49kDa_CS"/>
</dbReference>
<dbReference type="InterPro" id="IPR022885">
    <property type="entry name" value="NDH1_su_D/H"/>
</dbReference>
<dbReference type="InterPro" id="IPR029014">
    <property type="entry name" value="NiFe-Hase_large"/>
</dbReference>
<dbReference type="NCBIfam" id="NF004739">
    <property type="entry name" value="PRK06075.1"/>
    <property type="match status" value="1"/>
</dbReference>
<dbReference type="NCBIfam" id="NF005649">
    <property type="entry name" value="PRK07415.1"/>
    <property type="match status" value="1"/>
</dbReference>
<dbReference type="PANTHER" id="PTHR11993:SF10">
    <property type="entry name" value="NADH DEHYDROGENASE [UBIQUINONE] IRON-SULFUR PROTEIN 2, MITOCHONDRIAL"/>
    <property type="match status" value="1"/>
</dbReference>
<dbReference type="PANTHER" id="PTHR11993">
    <property type="entry name" value="NADH-UBIQUINONE OXIDOREDUCTASE 49 KDA SUBUNIT"/>
    <property type="match status" value="1"/>
</dbReference>
<dbReference type="Pfam" id="PF00346">
    <property type="entry name" value="Complex1_49kDa"/>
    <property type="match status" value="1"/>
</dbReference>
<dbReference type="SUPFAM" id="SSF56762">
    <property type="entry name" value="HydB/Nqo4-like"/>
    <property type="match status" value="1"/>
</dbReference>
<dbReference type="PROSITE" id="PS00535">
    <property type="entry name" value="COMPLEX1_49K"/>
    <property type="match status" value="1"/>
</dbReference>
<reference key="1">
    <citation type="journal article" date="2003" name="Nature">
        <title>The genome of a motile marine Synechococcus.</title>
        <authorList>
            <person name="Palenik B."/>
            <person name="Brahamsha B."/>
            <person name="Larimer F.W."/>
            <person name="Land M.L."/>
            <person name="Hauser L."/>
            <person name="Chain P."/>
            <person name="Lamerdin J.E."/>
            <person name="Regala W."/>
            <person name="Allen E.E."/>
            <person name="McCarren J."/>
            <person name="Paulsen I.T."/>
            <person name="Dufresne A."/>
            <person name="Partensky F."/>
            <person name="Webb E.A."/>
            <person name="Waterbury J."/>
        </authorList>
    </citation>
    <scope>NUCLEOTIDE SEQUENCE [LARGE SCALE GENOMIC DNA]</scope>
    <source>
        <strain>WH8102</strain>
    </source>
</reference>
<comment type="function">
    <text evidence="1">NDH-1 shuttles electrons from an unknown electron donor, via FMN and iron-sulfur (Fe-S) centers, to quinones in the respiratory and/or the photosynthetic chain. The immediate electron acceptor for the enzyme in this species is believed to be plastoquinone. Couples the redox reaction to proton translocation, and thus conserves the redox energy in a proton gradient. Cyanobacterial NDH-1 also plays a role in inorganic carbon-concentration.</text>
</comment>
<comment type="catalytic activity">
    <reaction evidence="1">
        <text>a plastoquinone + NADH + (n+1) H(+)(in) = a plastoquinol + NAD(+) + n H(+)(out)</text>
        <dbReference type="Rhea" id="RHEA:42608"/>
        <dbReference type="Rhea" id="RHEA-COMP:9561"/>
        <dbReference type="Rhea" id="RHEA-COMP:9562"/>
        <dbReference type="ChEBI" id="CHEBI:15378"/>
        <dbReference type="ChEBI" id="CHEBI:17757"/>
        <dbReference type="ChEBI" id="CHEBI:57540"/>
        <dbReference type="ChEBI" id="CHEBI:57945"/>
        <dbReference type="ChEBI" id="CHEBI:62192"/>
    </reaction>
</comment>
<comment type="catalytic activity">
    <reaction evidence="1">
        <text>a plastoquinone + NADPH + (n+1) H(+)(in) = a plastoquinol + NADP(+) + n H(+)(out)</text>
        <dbReference type="Rhea" id="RHEA:42612"/>
        <dbReference type="Rhea" id="RHEA-COMP:9561"/>
        <dbReference type="Rhea" id="RHEA-COMP:9562"/>
        <dbReference type="ChEBI" id="CHEBI:15378"/>
        <dbReference type="ChEBI" id="CHEBI:17757"/>
        <dbReference type="ChEBI" id="CHEBI:57783"/>
        <dbReference type="ChEBI" id="CHEBI:58349"/>
        <dbReference type="ChEBI" id="CHEBI:62192"/>
    </reaction>
</comment>
<comment type="subunit">
    <text evidence="1">NDH-1 can be composed of about 15 different subunits; different subcomplexes with different compositions have been identified which probably have different functions.</text>
</comment>
<comment type="subcellular location">
    <subcellularLocation>
        <location evidence="1">Cellular thylakoid membrane</location>
        <topology evidence="1">Peripheral membrane protein</topology>
        <orientation evidence="1">Cytoplasmic side</orientation>
    </subcellularLocation>
</comment>
<comment type="similarity">
    <text evidence="1">Belongs to the complex I 49 kDa subunit family.</text>
</comment>
<name>NDHH_PARMW</name>